<sequence>MSDRLKPLIGTAATRPLTREEAEFAFECLFEGEATPAQMGGLLMALRTRGETVDEYAAAATVMRAKCHKVRAPHGAIDIVGTGGDGKGTLNISTATAFVVAGAGVPVAKHGNRNLSSKSGAADALTEMGLNVMIGPERVEECLMEAGIGFMMAPMHHPAMRHVGPVRAELGTRTIFNILGPLTNPAGVKRQLTGAFSPDLIRPMAEVLAALGSEKAWLVHGGDGTDELAISAASKVAALEGGQIREFDLHPEEAGLPVHPFEEIVGGTPAENAQAFRALLEGAPGAYRDAVLLNAAAALVVADRAPGLREGVEIATESILSGAAKAKVALLARLTNAA</sequence>
<comment type="function">
    <text evidence="1">Catalyzes the transfer of the phosphoribosyl group of 5-phosphorylribose-1-pyrophosphate (PRPP) to anthranilate to yield N-(5'-phosphoribosyl)-anthranilate (PRA).</text>
</comment>
<comment type="catalytic activity">
    <reaction evidence="1">
        <text>N-(5-phospho-beta-D-ribosyl)anthranilate + diphosphate = 5-phospho-alpha-D-ribose 1-diphosphate + anthranilate</text>
        <dbReference type="Rhea" id="RHEA:11768"/>
        <dbReference type="ChEBI" id="CHEBI:16567"/>
        <dbReference type="ChEBI" id="CHEBI:18277"/>
        <dbReference type="ChEBI" id="CHEBI:33019"/>
        <dbReference type="ChEBI" id="CHEBI:58017"/>
        <dbReference type="EC" id="2.4.2.18"/>
    </reaction>
</comment>
<comment type="cofactor">
    <cofactor evidence="1">
        <name>Mg(2+)</name>
        <dbReference type="ChEBI" id="CHEBI:18420"/>
    </cofactor>
    <text evidence="1">Binds 2 magnesium ions per monomer.</text>
</comment>
<comment type="pathway">
    <text evidence="1">Amino-acid biosynthesis; L-tryptophan biosynthesis; L-tryptophan from chorismate: step 2/5.</text>
</comment>
<comment type="subunit">
    <text evidence="1">Homodimer.</text>
</comment>
<comment type="similarity">
    <text evidence="1">Belongs to the anthranilate phosphoribosyltransferase family.</text>
</comment>
<name>TRPD_CERS5</name>
<dbReference type="EC" id="2.4.2.18" evidence="1"/>
<dbReference type="EMBL" id="CP000661">
    <property type="protein sequence ID" value="ABP71982.1"/>
    <property type="molecule type" value="Genomic_DNA"/>
</dbReference>
<dbReference type="SMR" id="A4WX68"/>
<dbReference type="STRING" id="349102.Rsph17025_3098"/>
<dbReference type="KEGG" id="rsq:Rsph17025_3098"/>
<dbReference type="eggNOG" id="COG0547">
    <property type="taxonomic scope" value="Bacteria"/>
</dbReference>
<dbReference type="HOGENOM" id="CLU_034315_2_1_5"/>
<dbReference type="BioCyc" id="RSPH349102:G1G8M-3201-MONOMER"/>
<dbReference type="UniPathway" id="UPA00035">
    <property type="reaction ID" value="UER00041"/>
</dbReference>
<dbReference type="GO" id="GO:0005829">
    <property type="term" value="C:cytosol"/>
    <property type="evidence" value="ECO:0007669"/>
    <property type="project" value="TreeGrafter"/>
</dbReference>
<dbReference type="GO" id="GO:0004048">
    <property type="term" value="F:anthranilate phosphoribosyltransferase activity"/>
    <property type="evidence" value="ECO:0007669"/>
    <property type="project" value="UniProtKB-UniRule"/>
</dbReference>
<dbReference type="GO" id="GO:0000287">
    <property type="term" value="F:magnesium ion binding"/>
    <property type="evidence" value="ECO:0007669"/>
    <property type="project" value="UniProtKB-UniRule"/>
</dbReference>
<dbReference type="GO" id="GO:0000162">
    <property type="term" value="P:L-tryptophan biosynthetic process"/>
    <property type="evidence" value="ECO:0007669"/>
    <property type="project" value="UniProtKB-UniRule"/>
</dbReference>
<dbReference type="FunFam" id="3.40.1030.10:FF:000002">
    <property type="entry name" value="Anthranilate phosphoribosyltransferase"/>
    <property type="match status" value="1"/>
</dbReference>
<dbReference type="Gene3D" id="3.40.1030.10">
    <property type="entry name" value="Nucleoside phosphorylase/phosphoribosyltransferase catalytic domain"/>
    <property type="match status" value="1"/>
</dbReference>
<dbReference type="Gene3D" id="1.20.970.10">
    <property type="entry name" value="Transferase, Pyrimidine Nucleoside Phosphorylase, Chain C"/>
    <property type="match status" value="1"/>
</dbReference>
<dbReference type="HAMAP" id="MF_00211">
    <property type="entry name" value="TrpD"/>
    <property type="match status" value="1"/>
</dbReference>
<dbReference type="InterPro" id="IPR005940">
    <property type="entry name" value="Anthranilate_Pribosyl_Tfrase"/>
</dbReference>
<dbReference type="InterPro" id="IPR000312">
    <property type="entry name" value="Glycosyl_Trfase_fam3"/>
</dbReference>
<dbReference type="InterPro" id="IPR017459">
    <property type="entry name" value="Glycosyl_Trfase_fam3_N_dom"/>
</dbReference>
<dbReference type="InterPro" id="IPR036320">
    <property type="entry name" value="Glycosyl_Trfase_fam3_N_dom_sf"/>
</dbReference>
<dbReference type="InterPro" id="IPR035902">
    <property type="entry name" value="Nuc_phospho_transferase"/>
</dbReference>
<dbReference type="NCBIfam" id="TIGR01245">
    <property type="entry name" value="trpD"/>
    <property type="match status" value="1"/>
</dbReference>
<dbReference type="PANTHER" id="PTHR43285">
    <property type="entry name" value="ANTHRANILATE PHOSPHORIBOSYLTRANSFERASE"/>
    <property type="match status" value="1"/>
</dbReference>
<dbReference type="PANTHER" id="PTHR43285:SF2">
    <property type="entry name" value="ANTHRANILATE PHOSPHORIBOSYLTRANSFERASE"/>
    <property type="match status" value="1"/>
</dbReference>
<dbReference type="Pfam" id="PF02885">
    <property type="entry name" value="Glycos_trans_3N"/>
    <property type="match status" value="1"/>
</dbReference>
<dbReference type="Pfam" id="PF00591">
    <property type="entry name" value="Glycos_transf_3"/>
    <property type="match status" value="1"/>
</dbReference>
<dbReference type="SUPFAM" id="SSF52418">
    <property type="entry name" value="Nucleoside phosphorylase/phosphoribosyltransferase catalytic domain"/>
    <property type="match status" value="1"/>
</dbReference>
<dbReference type="SUPFAM" id="SSF47648">
    <property type="entry name" value="Nucleoside phosphorylase/phosphoribosyltransferase N-terminal domain"/>
    <property type="match status" value="1"/>
</dbReference>
<proteinExistence type="inferred from homology"/>
<protein>
    <recommendedName>
        <fullName evidence="1">Anthranilate phosphoribosyltransferase</fullName>
        <ecNumber evidence="1">2.4.2.18</ecNumber>
    </recommendedName>
</protein>
<organism>
    <name type="scientific">Cereibacter sphaeroides (strain ATCC 17025 / ATH 2.4.3)</name>
    <name type="common">Rhodobacter sphaeroides</name>
    <dbReference type="NCBI Taxonomy" id="349102"/>
    <lineage>
        <taxon>Bacteria</taxon>
        <taxon>Pseudomonadati</taxon>
        <taxon>Pseudomonadota</taxon>
        <taxon>Alphaproteobacteria</taxon>
        <taxon>Rhodobacterales</taxon>
        <taxon>Paracoccaceae</taxon>
        <taxon>Cereibacter</taxon>
    </lineage>
</organism>
<reference key="1">
    <citation type="submission" date="2007-04" db="EMBL/GenBank/DDBJ databases">
        <title>Complete sequence of chromosome of Rhodobacter sphaeroides ATCC 17025.</title>
        <authorList>
            <consortium name="US DOE Joint Genome Institute"/>
            <person name="Copeland A."/>
            <person name="Lucas S."/>
            <person name="Lapidus A."/>
            <person name="Barry K."/>
            <person name="Detter J.C."/>
            <person name="Glavina del Rio T."/>
            <person name="Hammon N."/>
            <person name="Israni S."/>
            <person name="Dalin E."/>
            <person name="Tice H."/>
            <person name="Pitluck S."/>
            <person name="Chertkov O."/>
            <person name="Brettin T."/>
            <person name="Bruce D."/>
            <person name="Han C."/>
            <person name="Schmutz J."/>
            <person name="Larimer F."/>
            <person name="Land M."/>
            <person name="Hauser L."/>
            <person name="Kyrpides N."/>
            <person name="Kim E."/>
            <person name="Richardson P."/>
            <person name="Mackenzie C."/>
            <person name="Choudhary M."/>
            <person name="Donohue T.J."/>
            <person name="Kaplan S."/>
        </authorList>
    </citation>
    <scope>NUCLEOTIDE SEQUENCE [LARGE SCALE GENOMIC DNA]</scope>
    <source>
        <strain>ATCC 17025 / ATH 2.4.3</strain>
    </source>
</reference>
<evidence type="ECO:0000255" key="1">
    <source>
        <dbReference type="HAMAP-Rule" id="MF_00211"/>
    </source>
</evidence>
<keyword id="KW-0028">Amino-acid biosynthesis</keyword>
<keyword id="KW-0057">Aromatic amino acid biosynthesis</keyword>
<keyword id="KW-0328">Glycosyltransferase</keyword>
<keyword id="KW-0460">Magnesium</keyword>
<keyword id="KW-0479">Metal-binding</keyword>
<keyword id="KW-0808">Transferase</keyword>
<keyword id="KW-0822">Tryptophan biosynthesis</keyword>
<feature type="chain" id="PRO_1000043060" description="Anthranilate phosphoribosyltransferase">
    <location>
        <begin position="1"/>
        <end position="338"/>
    </location>
</feature>
<feature type="binding site" evidence="1">
    <location>
        <position position="81"/>
    </location>
    <ligand>
        <name>5-phospho-alpha-D-ribose 1-diphosphate</name>
        <dbReference type="ChEBI" id="CHEBI:58017"/>
    </ligand>
</feature>
<feature type="binding site" evidence="1">
    <location>
        <position position="81"/>
    </location>
    <ligand>
        <name>anthranilate</name>
        <dbReference type="ChEBI" id="CHEBI:16567"/>
        <label>1</label>
    </ligand>
</feature>
<feature type="binding site" evidence="1">
    <location>
        <begin position="84"/>
        <end position="85"/>
    </location>
    <ligand>
        <name>5-phospho-alpha-D-ribose 1-diphosphate</name>
        <dbReference type="ChEBI" id="CHEBI:58017"/>
    </ligand>
</feature>
<feature type="binding site" evidence="1">
    <location>
        <position position="89"/>
    </location>
    <ligand>
        <name>5-phospho-alpha-D-ribose 1-diphosphate</name>
        <dbReference type="ChEBI" id="CHEBI:58017"/>
    </ligand>
</feature>
<feature type="binding site" evidence="1">
    <location>
        <begin position="91"/>
        <end position="94"/>
    </location>
    <ligand>
        <name>5-phospho-alpha-D-ribose 1-diphosphate</name>
        <dbReference type="ChEBI" id="CHEBI:58017"/>
    </ligand>
</feature>
<feature type="binding site" evidence="1">
    <location>
        <position position="93"/>
    </location>
    <ligand>
        <name>Mg(2+)</name>
        <dbReference type="ChEBI" id="CHEBI:18420"/>
        <label>1</label>
    </ligand>
</feature>
<feature type="binding site" evidence="1">
    <location>
        <begin position="109"/>
        <end position="117"/>
    </location>
    <ligand>
        <name>5-phospho-alpha-D-ribose 1-diphosphate</name>
        <dbReference type="ChEBI" id="CHEBI:58017"/>
    </ligand>
</feature>
<feature type="binding site" evidence="1">
    <location>
        <position position="112"/>
    </location>
    <ligand>
        <name>anthranilate</name>
        <dbReference type="ChEBI" id="CHEBI:16567"/>
        <label>1</label>
    </ligand>
</feature>
<feature type="binding site" evidence="1">
    <location>
        <position position="121"/>
    </location>
    <ligand>
        <name>5-phospho-alpha-D-ribose 1-diphosphate</name>
        <dbReference type="ChEBI" id="CHEBI:58017"/>
    </ligand>
</feature>
<feature type="binding site" evidence="1">
    <location>
        <position position="167"/>
    </location>
    <ligand>
        <name>anthranilate</name>
        <dbReference type="ChEBI" id="CHEBI:16567"/>
        <label>2</label>
    </ligand>
</feature>
<feature type="binding site" evidence="1">
    <location>
        <position position="226"/>
    </location>
    <ligand>
        <name>Mg(2+)</name>
        <dbReference type="ChEBI" id="CHEBI:18420"/>
        <label>2</label>
    </ligand>
</feature>
<feature type="binding site" evidence="1">
    <location>
        <position position="227"/>
    </location>
    <ligand>
        <name>Mg(2+)</name>
        <dbReference type="ChEBI" id="CHEBI:18420"/>
        <label>1</label>
    </ligand>
</feature>
<feature type="binding site" evidence="1">
    <location>
        <position position="227"/>
    </location>
    <ligand>
        <name>Mg(2+)</name>
        <dbReference type="ChEBI" id="CHEBI:18420"/>
        <label>2</label>
    </ligand>
</feature>
<accession>A4WX68</accession>
<gene>
    <name evidence="1" type="primary">trpD</name>
    <name type="ordered locus">Rsph17025_3098</name>
</gene>